<accession>B7LL13</accession>
<keyword id="KW-0012">Acyltransferase</keyword>
<keyword id="KW-0997">Cell inner membrane</keyword>
<keyword id="KW-1003">Cell membrane</keyword>
<keyword id="KW-0444">Lipid biosynthesis</keyword>
<keyword id="KW-0443">Lipid metabolism</keyword>
<keyword id="KW-0472">Membrane</keyword>
<keyword id="KW-0594">Phospholipid biosynthesis</keyword>
<keyword id="KW-1208">Phospholipid metabolism</keyword>
<keyword id="KW-0808">Transferase</keyword>
<organism>
    <name type="scientific">Escherichia fergusonii (strain ATCC 35469 / DSM 13698 / CCUG 18766 / IAM 14443 / JCM 21226 / LMG 7866 / NBRC 102419 / NCTC 12128 / CDC 0568-73)</name>
    <dbReference type="NCBI Taxonomy" id="585054"/>
    <lineage>
        <taxon>Bacteria</taxon>
        <taxon>Pseudomonadati</taxon>
        <taxon>Pseudomonadota</taxon>
        <taxon>Gammaproteobacteria</taxon>
        <taxon>Enterobacterales</taxon>
        <taxon>Enterobacteriaceae</taxon>
        <taxon>Escherichia</taxon>
    </lineage>
</organism>
<feature type="chain" id="PRO_1000123083" description="Glycerol-3-phosphate acyltransferase">
    <location>
        <begin position="1"/>
        <end position="806"/>
    </location>
</feature>
<feature type="short sequence motif" description="HXXXXD motif">
    <location>
        <begin position="305"/>
        <end position="310"/>
    </location>
</feature>
<gene>
    <name evidence="1" type="primary">plsB</name>
    <name type="ordered locus">EFER_4132</name>
</gene>
<proteinExistence type="inferred from homology"/>
<sequence length="806" mass="91239">MSGWPRIYYKLLNLPLSILVKSKSIPADPAPELGLDTSRPIMYVLPYNSKADLLTLRAQCLAHDLPDPLDPLEIDGTLLPRYVFIHGGPRVFTYYTPKEESIKLFHDYLDLHRSNPNLDVQMVPVSVMFGRSPGREKGEVNPPLRMLNGVQKFFAVLWLGRDSFVRFSPSVSLRHMADEHGTDKTIAQKLARVARMHFARQRLAAVGPRLPARQDLFNKLLASRAIAKAVEDEARSKKISHEKAQQNAVALMEEIAANFSYEMIRLTDRILGFTWNRLYQGINVHNAERVRQLAHDGHEIVYVPCHRSHMDYLLLSYVLYHQGLVPPHIAAGINLNFWPAGPIFRRLGAFFIRRTFKGNKLYSTVFREYLGELFSRGYSVEYFVEGGRSRTGRLLDPKTGTLSMTIQAMLRGGTRPITLVPIYIGYEHVMEVGTYAKELRGATKEKENMAQMLRGLSKLRNLGQGYVNFGEPIPLMTYLNQHVPEWRESIDPIEAVRPAWLTPTVNNIAADLMVRINNAGAANAMNLCCTALLASRQRSLTREQLTEQLDCYLDLLRNVPYSPDATVPSASASELIDHALQMNKFEVEKDTIGDIIILPREQAVLMTYYRNNIAHMLVLPSLMAAIVTQHRHISREALLHHVEVLYPMLKAELFLRWDRDELPDVIDALAREMARQGLITLQNDELQINPSHSRTLQLLAAGARETLQRYAITFWLLSANPAINRSSLEKESRTVAQRLSVLHGINAPEFFDKAVFSSLVLTLRDEGYISDSGDAEPAETLKVYQMLAELITSDVRLTIESATQGE</sequence>
<dbReference type="EC" id="2.3.1.15" evidence="1"/>
<dbReference type="EMBL" id="CU928158">
    <property type="protein sequence ID" value="CAQ91554.1"/>
    <property type="molecule type" value="Genomic_DNA"/>
</dbReference>
<dbReference type="RefSeq" id="WP_000017352.1">
    <property type="nucleotide sequence ID" value="NC_011740.1"/>
</dbReference>
<dbReference type="SMR" id="B7LL13"/>
<dbReference type="GeneID" id="75059282"/>
<dbReference type="KEGG" id="efe:EFER_4132"/>
<dbReference type="HOGENOM" id="CLU_015407_0_0_6"/>
<dbReference type="OrthoDB" id="335193at2"/>
<dbReference type="UniPathway" id="UPA00557">
    <property type="reaction ID" value="UER00612"/>
</dbReference>
<dbReference type="Proteomes" id="UP000000745">
    <property type="component" value="Chromosome"/>
</dbReference>
<dbReference type="GO" id="GO:0005886">
    <property type="term" value="C:plasma membrane"/>
    <property type="evidence" value="ECO:0007669"/>
    <property type="project" value="UniProtKB-SubCell"/>
</dbReference>
<dbReference type="GO" id="GO:0004366">
    <property type="term" value="F:glycerol-3-phosphate O-acyltransferase activity"/>
    <property type="evidence" value="ECO:0007669"/>
    <property type="project" value="UniProtKB-UniRule"/>
</dbReference>
<dbReference type="GO" id="GO:0016024">
    <property type="term" value="P:CDP-diacylglycerol biosynthetic process"/>
    <property type="evidence" value="ECO:0007669"/>
    <property type="project" value="UniProtKB-UniRule"/>
</dbReference>
<dbReference type="GO" id="GO:0006631">
    <property type="term" value="P:fatty acid metabolic process"/>
    <property type="evidence" value="ECO:0007669"/>
    <property type="project" value="TreeGrafter"/>
</dbReference>
<dbReference type="CDD" id="cd07993">
    <property type="entry name" value="LPLAT_DHAPAT-like"/>
    <property type="match status" value="1"/>
</dbReference>
<dbReference type="HAMAP" id="MF_00393">
    <property type="entry name" value="Glyc3P_acyltrans"/>
    <property type="match status" value="1"/>
</dbReference>
<dbReference type="InterPro" id="IPR022284">
    <property type="entry name" value="GPAT/DHAPAT"/>
</dbReference>
<dbReference type="InterPro" id="IPR045520">
    <property type="entry name" value="GPAT/DHAPAT_C"/>
</dbReference>
<dbReference type="InterPro" id="IPR041728">
    <property type="entry name" value="GPAT/DHAPAT_LPLAT"/>
</dbReference>
<dbReference type="InterPro" id="IPR028354">
    <property type="entry name" value="GPAT_PlsB"/>
</dbReference>
<dbReference type="InterPro" id="IPR002123">
    <property type="entry name" value="Plipid/glycerol_acylTrfase"/>
</dbReference>
<dbReference type="NCBIfam" id="TIGR03703">
    <property type="entry name" value="plsB"/>
    <property type="match status" value="1"/>
</dbReference>
<dbReference type="NCBIfam" id="NF003441">
    <property type="entry name" value="PRK04974.1"/>
    <property type="match status" value="1"/>
</dbReference>
<dbReference type="PANTHER" id="PTHR12563:SF17">
    <property type="entry name" value="DIHYDROXYACETONE PHOSPHATE ACYLTRANSFERASE"/>
    <property type="match status" value="1"/>
</dbReference>
<dbReference type="PANTHER" id="PTHR12563">
    <property type="entry name" value="GLYCEROL-3-PHOSPHATE ACYLTRANSFERASE"/>
    <property type="match status" value="1"/>
</dbReference>
<dbReference type="Pfam" id="PF01553">
    <property type="entry name" value="Acyltransferase"/>
    <property type="match status" value="1"/>
</dbReference>
<dbReference type="Pfam" id="PF19277">
    <property type="entry name" value="GPAT_C"/>
    <property type="match status" value="1"/>
</dbReference>
<dbReference type="PIRSF" id="PIRSF500064">
    <property type="entry name" value="GPAT"/>
    <property type="match status" value="1"/>
</dbReference>
<dbReference type="PIRSF" id="PIRSF000437">
    <property type="entry name" value="GPAT_DHAPAT"/>
    <property type="match status" value="1"/>
</dbReference>
<dbReference type="SMART" id="SM00563">
    <property type="entry name" value="PlsC"/>
    <property type="match status" value="1"/>
</dbReference>
<dbReference type="SUPFAM" id="SSF69593">
    <property type="entry name" value="Glycerol-3-phosphate (1)-acyltransferase"/>
    <property type="match status" value="1"/>
</dbReference>
<comment type="catalytic activity">
    <reaction evidence="1">
        <text>sn-glycerol 3-phosphate + an acyl-CoA = a 1-acyl-sn-glycero-3-phosphate + CoA</text>
        <dbReference type="Rhea" id="RHEA:15325"/>
        <dbReference type="ChEBI" id="CHEBI:57287"/>
        <dbReference type="ChEBI" id="CHEBI:57597"/>
        <dbReference type="ChEBI" id="CHEBI:57970"/>
        <dbReference type="ChEBI" id="CHEBI:58342"/>
        <dbReference type="EC" id="2.3.1.15"/>
    </reaction>
</comment>
<comment type="pathway">
    <text evidence="1">Phospholipid metabolism; CDP-diacylglycerol biosynthesis; CDP-diacylglycerol from sn-glycerol 3-phosphate: step 1/3.</text>
</comment>
<comment type="subcellular location">
    <subcellularLocation>
        <location evidence="1">Cell inner membrane</location>
        <topology evidence="1">Peripheral membrane protein</topology>
        <orientation evidence="1">Cytoplasmic side</orientation>
    </subcellularLocation>
</comment>
<comment type="domain">
    <text evidence="1">The HXXXXD motif is essential for acyltransferase activity and may constitute the binding site for the phosphate moiety of the glycerol-3-phosphate.</text>
</comment>
<comment type="similarity">
    <text evidence="1">Belongs to the GPAT/DAPAT family.</text>
</comment>
<reference key="1">
    <citation type="journal article" date="2009" name="PLoS Genet.">
        <title>Organised genome dynamics in the Escherichia coli species results in highly diverse adaptive paths.</title>
        <authorList>
            <person name="Touchon M."/>
            <person name="Hoede C."/>
            <person name="Tenaillon O."/>
            <person name="Barbe V."/>
            <person name="Baeriswyl S."/>
            <person name="Bidet P."/>
            <person name="Bingen E."/>
            <person name="Bonacorsi S."/>
            <person name="Bouchier C."/>
            <person name="Bouvet O."/>
            <person name="Calteau A."/>
            <person name="Chiapello H."/>
            <person name="Clermont O."/>
            <person name="Cruveiller S."/>
            <person name="Danchin A."/>
            <person name="Diard M."/>
            <person name="Dossat C."/>
            <person name="Karoui M.E."/>
            <person name="Frapy E."/>
            <person name="Garry L."/>
            <person name="Ghigo J.M."/>
            <person name="Gilles A.M."/>
            <person name="Johnson J."/>
            <person name="Le Bouguenec C."/>
            <person name="Lescat M."/>
            <person name="Mangenot S."/>
            <person name="Martinez-Jehanne V."/>
            <person name="Matic I."/>
            <person name="Nassif X."/>
            <person name="Oztas S."/>
            <person name="Petit M.A."/>
            <person name="Pichon C."/>
            <person name="Rouy Z."/>
            <person name="Ruf C.S."/>
            <person name="Schneider D."/>
            <person name="Tourret J."/>
            <person name="Vacherie B."/>
            <person name="Vallenet D."/>
            <person name="Medigue C."/>
            <person name="Rocha E.P.C."/>
            <person name="Denamur E."/>
        </authorList>
    </citation>
    <scope>NUCLEOTIDE SEQUENCE [LARGE SCALE GENOMIC DNA]</scope>
    <source>
        <strain>ATCC 35469 / DSM 13698 / BCRC 15582 / CCUG 18766 / IAM 14443 / JCM 21226 / LMG 7866 / NBRC 102419 / NCTC 12128 / CDC 0568-73</strain>
    </source>
</reference>
<evidence type="ECO:0000255" key="1">
    <source>
        <dbReference type="HAMAP-Rule" id="MF_00393"/>
    </source>
</evidence>
<name>PLSB_ESCF3</name>
<protein>
    <recommendedName>
        <fullName evidence="1">Glycerol-3-phosphate acyltransferase</fullName>
        <shortName evidence="1">GPAT</shortName>
        <ecNumber evidence="1">2.3.1.15</ecNumber>
    </recommendedName>
</protein>